<proteinExistence type="evidence at transcript level"/>
<feature type="chain" id="PRO_0000036709" description="Replicase polyprotein 1ab">
    <location>
        <begin position="1"/>
        <end position="3595"/>
    </location>
</feature>
<feature type="chain" id="PRO_0000036711" description="Nsp1-alpha papain-like cysteine proteinase" evidence="1">
    <location>
        <begin position="1"/>
        <end status="unknown"/>
    </location>
</feature>
<feature type="chain" id="PRO_0000036712" description="Nsp1-beta papain-like cysteine proteinase" evidence="1">
    <location>
        <begin status="unknown"/>
        <end position="350"/>
    </location>
</feature>
<feature type="chain" id="PRO_0000036713" description="Nsp2 cysteine proteinase" evidence="1">
    <location>
        <begin position="351"/>
        <end position="1236"/>
    </location>
</feature>
<feature type="chain" id="PRO_0000036714" description="Non-structural protein 3" evidence="1">
    <location>
        <begin position="1237"/>
        <end position="1463"/>
    </location>
</feature>
<feature type="chain" id="PRO_0000036715" description="3C-like serine proteinase" evidence="1">
    <location>
        <begin position="1464"/>
        <end position="1664"/>
    </location>
</feature>
<feature type="chain" id="PRO_0000036716" description="Non-structural protein 5-6-7" evidence="1">
    <location>
        <begin position="1665"/>
        <end position="2055"/>
    </location>
</feature>
<feature type="chain" id="PRO_0000423138" description="Non-structural protein 5" evidence="1">
    <location>
        <begin position="1665"/>
        <end position="1830"/>
    </location>
</feature>
<feature type="chain" id="PRO_0000423139" description="Non-structural protein 6" evidence="1">
    <location>
        <begin position="1831"/>
        <end position="1843"/>
    </location>
</feature>
<feature type="chain" id="PRO_0000423140" description="Non-structural protein 7-alpha" evidence="1">
    <location>
        <begin position="1844"/>
        <end position="1999"/>
    </location>
</feature>
<feature type="chain" id="PRO_0000423141" description="Non-structural protein 7-beta" evidence="1">
    <location>
        <begin position="2000"/>
        <end position="2055"/>
    </location>
</feature>
<feature type="chain" id="PRO_0000036717" description="RNA-directed RNA polymerase" evidence="1">
    <location>
        <begin position="2056"/>
        <end position="2746"/>
    </location>
</feature>
<feature type="chain" id="PRO_0000036718" description="Non-structural protein 8" evidence="1">
    <location>
        <begin position="2056"/>
        <end position="2104"/>
    </location>
</feature>
<feature type="chain" id="PRO_0000036719" description="Helicase" evidence="1">
    <location>
        <begin position="2746"/>
        <end position="3195"/>
    </location>
</feature>
<feature type="chain" id="PRO_0000036720" description="Uridylate-specific endoribonuclease nsp11" evidence="1">
    <location>
        <begin position="3196"/>
        <end position="3418"/>
    </location>
</feature>
<feature type="chain" id="PRO_0000036721" description="Non-structural protein 12" evidence="1">
    <location>
        <begin position="3419"/>
        <end position="3595"/>
    </location>
</feature>
<feature type="transmembrane region" description="Helical" evidence="4">
    <location>
        <begin position="922"/>
        <end position="942"/>
    </location>
</feature>
<feature type="transmembrane region" description="Helical" evidence="4">
    <location>
        <begin position="951"/>
        <end position="971"/>
    </location>
</feature>
<feature type="transmembrane region" description="Helical" evidence="4">
    <location>
        <begin position="1019"/>
        <end position="1039"/>
    </location>
</feature>
<feature type="transmembrane region" description="Helical" evidence="4">
    <location>
        <begin position="1239"/>
        <end position="1259"/>
    </location>
</feature>
<feature type="transmembrane region" description="Helical" evidence="4">
    <location>
        <begin position="1316"/>
        <end position="1336"/>
    </location>
</feature>
<feature type="transmembrane region" description="Helical" evidence="4">
    <location>
        <begin position="1345"/>
        <end position="1365"/>
    </location>
</feature>
<feature type="transmembrane region" description="Helical" evidence="4">
    <location>
        <begin position="1381"/>
        <end position="1401"/>
    </location>
</feature>
<feature type="transmembrane region" description="Helical" evidence="4">
    <location>
        <begin position="1673"/>
        <end position="1693"/>
    </location>
</feature>
<feature type="transmembrane region" description="Helical" evidence="4">
    <location>
        <begin position="1711"/>
        <end position="1731"/>
    </location>
</feature>
<feature type="transmembrane region" description="Helical" evidence="4">
    <location>
        <begin position="1744"/>
        <end position="1764"/>
    </location>
</feature>
<feature type="transmembrane region" description="Helical" evidence="4">
    <location>
        <begin position="1784"/>
        <end position="1804"/>
    </location>
</feature>
<feature type="domain" description="Peptidase C31" evidence="8">
    <location>
        <begin position="56"/>
        <end position="164"/>
    </location>
</feature>
<feature type="domain" description="Peptidase C32" evidence="9">
    <location>
        <begin position="239"/>
        <end position="350"/>
    </location>
</feature>
<feature type="domain" description="Peptidase C33" evidence="7">
    <location>
        <begin position="633"/>
        <end position="736"/>
    </location>
</feature>
<feature type="domain" description="Peptidase S32" evidence="6">
    <location>
        <begin position="1464"/>
        <end position="1664"/>
    </location>
</feature>
<feature type="domain" description="NiRAN" evidence="11">
    <location>
        <begin position="2083"/>
        <end position="2253"/>
    </location>
</feature>
<feature type="domain" description="RdRp catalytic" evidence="5">
    <location>
        <begin position="2491"/>
        <end position="2625"/>
    </location>
</feature>
<feature type="domain" description="AV ZBD" evidence="10">
    <location>
        <begin position="2746"/>
        <end position="2812"/>
    </location>
</feature>
<feature type="domain" description="(+)RNA virus helicase ATP-binding">
    <location>
        <begin position="2862"/>
        <end position="3022"/>
    </location>
</feature>
<feature type="domain" description="(+)RNA virus helicase C-terminal">
    <location>
        <begin position="3023"/>
        <end position="3157"/>
    </location>
</feature>
<feature type="domain" description="AV-Nsp11N/CoV-Nsp15M" evidence="13">
    <location>
        <begin position="3196"/>
        <end position="3292"/>
    </location>
</feature>
<feature type="domain" description="NendoU" evidence="12">
    <location>
        <begin position="3294"/>
        <end position="3416"/>
    </location>
</feature>
<feature type="zinc finger region" description="C4-type; atypical">
    <location>
        <begin position="3"/>
        <end position="23"/>
    </location>
</feature>
<feature type="region of interest" description="Disordered" evidence="14">
    <location>
        <begin position="482"/>
        <end position="527"/>
    </location>
</feature>
<feature type="region of interest" description="Disordered" evidence="14">
    <location>
        <begin position="808"/>
        <end position="862"/>
    </location>
</feature>
<feature type="region of interest" description="HD1">
    <location>
        <begin position="922"/>
        <end position="1039"/>
    </location>
</feature>
<feature type="region of interest" description="HD2">
    <location>
        <begin position="1239"/>
        <end position="1399"/>
    </location>
</feature>
<feature type="region of interest" description="HD3">
    <location>
        <begin position="1687"/>
        <end position="1804"/>
    </location>
</feature>
<feature type="compositionally biased region" description="Basic and acidic residues" evidence="14">
    <location>
        <begin position="511"/>
        <end position="520"/>
    </location>
</feature>
<feature type="compositionally biased region" description="Basic and acidic residues" evidence="14">
    <location>
        <begin position="851"/>
        <end position="860"/>
    </location>
</feature>
<feature type="active site" description="For Nsp1-alpha papain-like cysteine proteinase activity" evidence="8">
    <location>
        <position position="63"/>
    </location>
</feature>
<feature type="active site" description="For Nsp1-alpha papain-like cysteine proteinase activity" evidence="8">
    <location>
        <position position="130"/>
    </location>
</feature>
<feature type="active site" description="For Nsp1-beta papain-like cysteine proteinase activity" evidence="9">
    <location>
        <position position="246"/>
    </location>
</feature>
<feature type="active site" description="For Nsp1-beta papain-like cysteine proteinase activity" evidence="9">
    <location>
        <position position="309"/>
    </location>
</feature>
<feature type="active site" description="For Nsp2 cysteine proteinase activity" evidence="7">
    <location>
        <position position="378"/>
    </location>
</feature>
<feature type="active site" description="For Nsp2 cysteine proteinase activity" evidence="7">
    <location>
        <position position="430"/>
    </location>
</feature>
<feature type="active site" description="Charge relay system; for 3C-like serine proteinase activity" evidence="6">
    <location>
        <position position="1502"/>
    </location>
</feature>
<feature type="active site" description="Charge relay system; for 3C-like serine proteinase activity" evidence="6">
    <location>
        <position position="1527"/>
    </location>
</feature>
<feature type="active site" description="Charge relay system; for 3C-like serine proteinase activity" evidence="6">
    <location>
        <position position="1580"/>
    </location>
</feature>
<feature type="active site" evidence="12">
    <location>
        <position position="3325"/>
    </location>
</feature>
<feature type="active site" evidence="12">
    <location>
        <position position="3340"/>
    </location>
</feature>
<feature type="active site" evidence="12">
    <location>
        <position position="3369"/>
    </location>
</feature>
<feature type="binding site" evidence="10">
    <location>
        <position position="2752"/>
    </location>
    <ligand>
        <name>Zn(2+)</name>
        <dbReference type="ChEBI" id="CHEBI:29105"/>
        <label>1</label>
    </ligand>
</feature>
<feature type="binding site" evidence="10">
    <location>
        <position position="2755"/>
    </location>
    <ligand>
        <name>Zn(2+)</name>
        <dbReference type="ChEBI" id="CHEBI:29105"/>
        <label>1</label>
    </ligand>
</feature>
<feature type="binding site" evidence="10">
    <location>
        <position position="2765"/>
    </location>
    <ligand>
        <name>Zn(2+)</name>
        <dbReference type="ChEBI" id="CHEBI:29105"/>
        <label>2</label>
    </ligand>
</feature>
<feature type="binding site" evidence="10">
    <location>
        <position position="2770"/>
    </location>
    <ligand>
        <name>Zn(2+)</name>
        <dbReference type="ChEBI" id="CHEBI:29105"/>
        <label>1</label>
    </ligand>
</feature>
<feature type="binding site" evidence="10">
    <location>
        <position position="2773"/>
    </location>
    <ligand>
        <name>Zn(2+)</name>
        <dbReference type="ChEBI" id="CHEBI:29105"/>
        <label>1</label>
    </ligand>
</feature>
<feature type="binding site" evidence="10">
    <location>
        <position position="2777"/>
    </location>
    <ligand>
        <name>Zn(2+)</name>
        <dbReference type="ChEBI" id="CHEBI:29105"/>
        <label>2</label>
    </ligand>
</feature>
<feature type="binding site" evidence="10">
    <location>
        <position position="2779"/>
    </location>
    <ligand>
        <name>Zn(2+)</name>
        <dbReference type="ChEBI" id="CHEBI:29105"/>
        <label>2</label>
    </ligand>
</feature>
<feature type="binding site" evidence="10">
    <location>
        <position position="2782"/>
    </location>
    <ligand>
        <name>Zn(2+)</name>
        <dbReference type="ChEBI" id="CHEBI:29105"/>
        <label>2</label>
    </ligand>
</feature>
<feature type="binding site" evidence="10">
    <location>
        <position position="2789"/>
    </location>
    <ligand>
        <name>Zn(2+)</name>
        <dbReference type="ChEBI" id="CHEBI:29105"/>
        <label>3</label>
    </ligand>
</feature>
<feature type="binding site" evidence="10">
    <location>
        <position position="2791"/>
    </location>
    <ligand>
        <name>Zn(2+)</name>
        <dbReference type="ChEBI" id="CHEBI:29105"/>
        <label>3</label>
    </ligand>
</feature>
<feature type="binding site" evidence="10">
    <location>
        <position position="2798"/>
    </location>
    <ligand>
        <name>Zn(2+)</name>
        <dbReference type="ChEBI" id="CHEBI:29105"/>
        <label>3</label>
    </ligand>
</feature>
<feature type="binding site" evidence="10">
    <location>
        <position position="2801"/>
    </location>
    <ligand>
        <name>Zn(2+)</name>
        <dbReference type="ChEBI" id="CHEBI:29105"/>
        <label>3</label>
    </ligand>
</feature>
<feature type="binding site" evidence="1">
    <location>
        <begin position="2897"/>
        <end position="2904"/>
    </location>
    <ligand>
        <name>ATP</name>
        <dbReference type="ChEBI" id="CHEBI:30616"/>
    </ligand>
</feature>
<feature type="site" description="Cleavage; by autolysis" evidence="4">
    <location>
        <begin position="164"/>
        <end position="165"/>
    </location>
</feature>
<feature type="site" description="Cleavage; by autolysis" evidence="4">
    <location>
        <begin position="350"/>
        <end position="351"/>
    </location>
</feature>
<feature type="site" description="Cleavage; by CP2" evidence="1">
    <location>
        <begin position="1236"/>
        <end position="1237"/>
    </location>
</feature>
<feature type="site" description="Cleavage; by 3CLSP" evidence="1">
    <location>
        <begin position="1463"/>
        <end position="1464"/>
    </location>
</feature>
<feature type="site" description="Cleavage; by 3CLSP" evidence="1">
    <location>
        <begin position="1664"/>
        <end position="1665"/>
    </location>
</feature>
<feature type="site" description="Cleavage; by 3CLSP" evidence="1">
    <location>
        <begin position="1830"/>
        <end position="1831"/>
    </location>
</feature>
<feature type="site" description="Cleavage; by 3CLSP" evidence="1">
    <location>
        <begin position="1843"/>
        <end position="1844"/>
    </location>
</feature>
<feature type="site" description="Cleavage; by 3CLSP" evidence="1">
    <location>
        <begin position="1999"/>
        <end position="2000"/>
    </location>
</feature>
<feature type="site" description="Cleavage; by 3CLSP" evidence="1">
    <location>
        <begin position="2055"/>
        <end position="2056"/>
    </location>
</feature>
<feature type="site" description="Cleavage; by 3CLSP" evidence="1">
    <location>
        <begin position="2745"/>
        <end position="2746"/>
    </location>
</feature>
<feature type="site" description="Cleavage; by 3CLSP" evidence="1">
    <location>
        <begin position="3195"/>
        <end position="3196"/>
    </location>
</feature>
<feature type="site" description="Cleavage; by 3CLSP" evidence="1">
    <location>
        <begin position="3418"/>
        <end position="3419"/>
    </location>
</feature>
<feature type="splice variant" id="VSP_032894" description="In isoform Replicase polyprotein 1a." evidence="15">
    <location>
        <begin position="2105"/>
        <end position="3595"/>
    </location>
</feature>
<comment type="function">
    <text>The replicase polyprotein 1ab is a multifunctional protein: it contains the activities necessary for the transcription of negative stranded RNA, leader RNA, subgenomic mRNAs and progeny virion RNA as well as proteinases responsible for the cleavage of the polyprotein into functional products.</text>
</comment>
<comment type="function">
    <text evidence="1">The Nsp1 chain is essential for viral subgenomic mRNA synthesis.</text>
</comment>
<comment type="function">
    <text evidence="1">The 3C-like serine proteinase chain is responsible for the majority of cleavages as it cleaves the C-terminus of the polyprotein.</text>
</comment>
<comment type="function">
    <molecule>Uridylate-specific endoribonuclease nsp11</molecule>
    <text evidence="2 3">Plays a role in viral transcription/replication and prevents the simultaneous activation of host cell dsRNA sensors, such as MDA5/IFIH1, OAS, and PKR (By similarity). Acts by degrading the 5'-polyuridines generated during replication of the poly(A) region of viral genomic and subgenomic RNAs. Catalyzes a two-step reaction in which a 2'3'-cyclic phosphate (2'3'-cP) is first generated by 2'-O transesterification, which is then hydrolyzed to a 3'-phosphate (3'-P) (By similarity). If not degraded, poly(U) RNA would hybridize with poly(A) RNA tails and activate host dsRNA sensors (By similarity).</text>
</comment>
<comment type="function">
    <text evidence="1">The helicase chain, which contains a zinc finger structure, displays RNA and DNA duplex-unwinding activities with 5' to 3' polarity.</text>
</comment>
<comment type="catalytic activity">
    <reaction evidence="5">
        <text>RNA(n) + a ribonucleoside 5'-triphosphate = RNA(n+1) + diphosphate</text>
        <dbReference type="Rhea" id="RHEA:21248"/>
        <dbReference type="Rhea" id="RHEA-COMP:14527"/>
        <dbReference type="Rhea" id="RHEA-COMP:17342"/>
        <dbReference type="ChEBI" id="CHEBI:33019"/>
        <dbReference type="ChEBI" id="CHEBI:61557"/>
        <dbReference type="ChEBI" id="CHEBI:140395"/>
        <dbReference type="EC" id="2.7.7.48"/>
    </reaction>
</comment>
<comment type="catalytic activity">
    <reaction>
        <text>ATP + H2O = ADP + phosphate + H(+)</text>
        <dbReference type="Rhea" id="RHEA:13065"/>
        <dbReference type="ChEBI" id="CHEBI:15377"/>
        <dbReference type="ChEBI" id="CHEBI:15378"/>
        <dbReference type="ChEBI" id="CHEBI:30616"/>
        <dbReference type="ChEBI" id="CHEBI:43474"/>
        <dbReference type="ChEBI" id="CHEBI:456216"/>
        <dbReference type="EC" id="3.6.4.12"/>
    </reaction>
</comment>
<comment type="catalytic activity">
    <reaction>
        <text>ATP + H2O = ADP + phosphate + H(+)</text>
        <dbReference type="Rhea" id="RHEA:13065"/>
        <dbReference type="ChEBI" id="CHEBI:15377"/>
        <dbReference type="ChEBI" id="CHEBI:15378"/>
        <dbReference type="ChEBI" id="CHEBI:30616"/>
        <dbReference type="ChEBI" id="CHEBI:43474"/>
        <dbReference type="ChEBI" id="CHEBI:456216"/>
        <dbReference type="EC" id="3.6.4.13"/>
    </reaction>
</comment>
<comment type="catalytic activity">
    <molecule>Uridylate-specific endoribonuclease nsp11</molecule>
    <reaction evidence="3">
        <text>uridylyl-uridylyl-ribonucleotide-RNA = a 3'-end uridylyl-2',3'-cyclophospho-uridine-RNA + a 5'-end dephospho-ribonucleoside-RNA</text>
        <dbReference type="Rhea" id="RHEA:67732"/>
        <dbReference type="Rhea" id="RHEA-COMP:13936"/>
        <dbReference type="Rhea" id="RHEA-COMP:17334"/>
        <dbReference type="Rhea" id="RHEA-COMP:17335"/>
        <dbReference type="ChEBI" id="CHEBI:138284"/>
        <dbReference type="ChEBI" id="CHEBI:173079"/>
        <dbReference type="ChEBI" id="CHEBI:173080"/>
    </reaction>
</comment>
<comment type="subcellular location">
    <molecule>Nsp2 cysteine proteinase</molecule>
    <subcellularLocation>
        <location evidence="15">Host membrane</location>
        <topology evidence="15">Multi-pass membrane protein</topology>
    </subcellularLocation>
</comment>
<comment type="subcellular location">
    <molecule>Non-structural protein 3</molecule>
    <subcellularLocation>
        <location evidence="15">Host membrane</location>
        <topology evidence="15">Multi-pass membrane protein</topology>
    </subcellularLocation>
</comment>
<comment type="subcellular location">
    <molecule>Non-structural protein 5-6-7</molecule>
    <subcellularLocation>
        <location evidence="15">Host membrane</location>
        <topology evidence="15">Multi-pass membrane protein</topology>
    </subcellularLocation>
</comment>
<comment type="subcellular location">
    <molecule>3C-like serine proteinase</molecule>
    <subcellularLocation>
        <location evidence="15">Host cytoplasm</location>
    </subcellularLocation>
</comment>
<comment type="subcellular location">
    <molecule>RNA-directed RNA polymerase</molecule>
    <subcellularLocation>
        <location evidence="15">Host cytoplasm</location>
        <location evidence="15">Host perinuclear region</location>
    </subcellularLocation>
</comment>
<comment type="subcellular location">
    <molecule>Helicase</molecule>
    <subcellularLocation>
        <location evidence="15">Host cytoplasm</location>
        <location evidence="15">Host perinuclear region</location>
    </subcellularLocation>
</comment>
<comment type="alternative products">
    <event type="ribosomal frameshifting"/>
    <isoform>
        <id>Q68772-1</id>
        <name>Replicase polyprotein 1ab</name>
        <name>pp1ab</name>
        <sequence type="displayed"/>
    </isoform>
    <isoform>
        <id>Q68772-2</id>
        <name>Replicase polyprotein 1a</name>
        <name>pp1a</name>
        <name>ORF1a polyprotein</name>
        <sequence type="described" ref="VSP_032894"/>
    </isoform>
</comment>
<comment type="domain">
    <text evidence="1">The hydrophobic domains (HD) could mediate the membrane association of the replication complex and thereby alter the architecture of the host cell membrane.</text>
</comment>
<comment type="PTM">
    <text evidence="1">Specific enzymatic cleavages in vivo by its own proteases yield mature proteins. There are two alternative pathways for processing. Either nsp4-5 is cleaved, which represents the major pathway or the nsp5-6 and nsp6-7 are processed, which represents the minor pathway. The major pathway occurs when nsp2 acts as a cofactor for nsp4 (By similarity).</text>
</comment>
<comment type="miscellaneous">
    <molecule>Isoform Replicase polyprotein 1ab</molecule>
    <text>Produced by -1 ribosomal frameshifting at the 1a-1b genes boundary.</text>
</comment>
<comment type="miscellaneous">
    <molecule>Isoform Replicase polyprotein 1a</molecule>
    <text evidence="15">Produced by conventional translation.</text>
</comment>
<comment type="similarity">
    <text evidence="15">Belongs to the arteriviridae polyprotein family.</text>
</comment>
<organism>
    <name type="scientific">Simian hemorrhagic fever virus</name>
    <name type="common">SHFV</name>
    <dbReference type="NCBI Taxonomy" id="38143"/>
    <lineage>
        <taxon>Viruses</taxon>
        <taxon>Riboviria</taxon>
        <taxon>Orthornavirae</taxon>
        <taxon>Pisuviricota</taxon>
        <taxon>Pisoniviricetes</taxon>
        <taxon>Nidovirales</taxon>
        <taxon>Arnidovirineae</taxon>
        <taxon>Arteriviridae</taxon>
        <taxon>Simarterivirinae</taxon>
        <taxon>Deltaarterivirus</taxon>
        <taxon>Hedartevirus</taxon>
        <taxon>Deltaarterivirus hemfev</taxon>
    </lineage>
</organism>
<organismHost>
    <name type="scientific">Erythrocebus patas</name>
    <name type="common">Red guenon</name>
    <name type="synonym">Cercopithecus patas</name>
    <dbReference type="NCBI Taxonomy" id="9538"/>
</organismHost>
<organismHost>
    <name type="scientific">Macaca</name>
    <name type="common">macaques</name>
    <dbReference type="NCBI Taxonomy" id="9539"/>
</organismHost>
<gene>
    <name type="primary">rep</name>
    <name type="ORF">1a-1b</name>
</gene>
<reference key="1">
    <citation type="submission" date="2001-09" db="EMBL/GenBank/DDBJ databases">
        <authorList>
            <person name="Maines T.R."/>
            <person name="Starling H.H."/>
            <person name="Methven S.L."/>
            <person name="Chen L."/>
            <person name="Kumar S.N."/>
            <person name="Geisbert J.B."/>
            <person name="Jahrling P.B."/>
            <person name="Brinton M.A."/>
        </authorList>
    </citation>
    <scope>NUCLEOTIDE SEQUENCE [GENOMIC RNA]</scope>
    <source>
        <strain>LVR 42-0/M6941</strain>
    </source>
</reference>
<reference key="2">
    <citation type="submission" date="2014-12" db="EMBL/GenBank/DDBJ databases">
        <authorList>
            <person name="Vatter H."/>
            <person name="Di H."/>
            <person name="Donaldson E.F."/>
            <person name="Brinton M.A."/>
        </authorList>
    </citation>
    <scope>SEQUENCE REVISION</scope>
</reference>
<reference key="3">
    <citation type="journal article" date="1995" name="Virus Res.">
        <title>Detection of related positive-strand RNA virus genomes by reverse transcription/polymerase chain reaction using degenerate primers for common replicase sequences.</title>
        <authorList>
            <person name="Chen Z."/>
            <person name="Plagemann P.G.W."/>
        </authorList>
    </citation>
    <scope>NUCLEOTIDE SEQUENCE [GENOMIC RNA] OF 2509-2548</scope>
</reference>
<name>RPOA_SHFV</name>
<evidence type="ECO:0000250" key="1"/>
<evidence type="ECO:0000250" key="2">
    <source>
        <dbReference type="UniProtKB" id="P0C6X7"/>
    </source>
</evidence>
<evidence type="ECO:0000250" key="3">
    <source>
        <dbReference type="UniProtKB" id="P19811"/>
    </source>
</evidence>
<evidence type="ECO:0000255" key="4"/>
<evidence type="ECO:0000255" key="5">
    <source>
        <dbReference type="PROSITE-ProRule" id="PRU00539"/>
    </source>
</evidence>
<evidence type="ECO:0000255" key="6">
    <source>
        <dbReference type="PROSITE-ProRule" id="PRU00826"/>
    </source>
</evidence>
<evidence type="ECO:0000255" key="7">
    <source>
        <dbReference type="PROSITE-ProRule" id="PRU00871"/>
    </source>
</evidence>
<evidence type="ECO:0000255" key="8">
    <source>
        <dbReference type="PROSITE-ProRule" id="PRU00872"/>
    </source>
</evidence>
<evidence type="ECO:0000255" key="9">
    <source>
        <dbReference type="PROSITE-ProRule" id="PRU00873"/>
    </source>
</evidence>
<evidence type="ECO:0000255" key="10">
    <source>
        <dbReference type="PROSITE-ProRule" id="PRU00985"/>
    </source>
</evidence>
<evidence type="ECO:0000255" key="11">
    <source>
        <dbReference type="PROSITE-ProRule" id="PRU01292"/>
    </source>
</evidence>
<evidence type="ECO:0000255" key="12">
    <source>
        <dbReference type="PROSITE-ProRule" id="PRU01303"/>
    </source>
</evidence>
<evidence type="ECO:0000255" key="13">
    <source>
        <dbReference type="PROSITE-ProRule" id="PRU01306"/>
    </source>
</evidence>
<evidence type="ECO:0000256" key="14">
    <source>
        <dbReference type="SAM" id="MobiDB-lite"/>
    </source>
</evidence>
<evidence type="ECO:0000305" key="15"/>
<keyword id="KW-0067">ATP-binding</keyword>
<keyword id="KW-0255">Endonuclease</keyword>
<keyword id="KW-0347">Helicase</keyword>
<keyword id="KW-1035">Host cytoplasm</keyword>
<keyword id="KW-1043">Host membrane</keyword>
<keyword id="KW-0378">Hydrolase</keyword>
<keyword id="KW-0456">Lyase</keyword>
<keyword id="KW-0472">Membrane</keyword>
<keyword id="KW-0479">Metal-binding</keyword>
<keyword id="KW-0540">Nuclease</keyword>
<keyword id="KW-0547">Nucleotide-binding</keyword>
<keyword id="KW-0548">Nucleotidyltransferase</keyword>
<keyword id="KW-0645">Protease</keyword>
<keyword id="KW-1185">Reference proteome</keyword>
<keyword id="KW-0688">Ribosomal frameshifting</keyword>
<keyword id="KW-0696">RNA-directed RNA polymerase</keyword>
<keyword id="KW-0720">Serine protease</keyword>
<keyword id="KW-0788">Thiol protease</keyword>
<keyword id="KW-0808">Transferase</keyword>
<keyword id="KW-0812">Transmembrane</keyword>
<keyword id="KW-1133">Transmembrane helix</keyword>
<keyword id="KW-0693">Viral RNA replication</keyword>
<keyword id="KW-0862">Zinc</keyword>
<keyword id="KW-0863">Zinc-finger</keyword>
<protein>
    <recommendedName>
        <fullName>Replicase polyprotein 1ab</fullName>
    </recommendedName>
    <alternativeName>
        <fullName>ORF1ab polyprotein</fullName>
    </alternativeName>
    <component>
        <recommendedName>
            <fullName>Nsp1-alpha papain-like cysteine proteinase</fullName>
            <ecNumber>3.4.22.-</ecNumber>
        </recommendedName>
        <alternativeName>
            <fullName>PCP1-alpha</fullName>
        </alternativeName>
    </component>
    <component>
        <recommendedName>
            <fullName>Nsp1-beta papain-like cysteine proteinase</fullName>
            <ecNumber>3.4.22.-</ecNumber>
        </recommendedName>
        <alternativeName>
            <fullName>PCP1-beta</fullName>
        </alternativeName>
    </component>
    <component>
        <recommendedName>
            <fullName>Nsp2 cysteine proteinase</fullName>
            <ecNumber>3.4.22.-</ecNumber>
        </recommendedName>
        <alternativeName>
            <fullName>CP2</fullName>
            <shortName>CP</shortName>
        </alternativeName>
    </component>
    <component>
        <recommendedName>
            <fullName>Non-structural protein 3</fullName>
            <shortName>Nsp3</shortName>
        </recommendedName>
    </component>
    <component>
        <recommendedName>
            <fullName>3C-like serine proteinase</fullName>
            <shortName>3CLSP</shortName>
            <ecNumber>3.4.21.-</ecNumber>
        </recommendedName>
        <alternativeName>
            <fullName>Nsp4</fullName>
        </alternativeName>
    </component>
    <component>
        <recommendedName>
            <fullName>Non-structural protein 5-6-7</fullName>
            <shortName>Nsp5-6-7</shortName>
        </recommendedName>
    </component>
    <component>
        <recommendedName>
            <fullName>Non-structural protein 5</fullName>
            <shortName>Nsp5</shortName>
        </recommendedName>
    </component>
    <component>
        <recommendedName>
            <fullName>Non-structural protein 6</fullName>
            <shortName>Nsp6</shortName>
        </recommendedName>
    </component>
    <component>
        <recommendedName>
            <fullName>Non-structural protein 7-alpha</fullName>
            <shortName>Nsp7-alpha</shortName>
        </recommendedName>
    </component>
    <component>
        <recommendedName>
            <fullName>Non-structural protein 7-beta</fullName>
            <shortName>Nsp7-beta</shortName>
        </recommendedName>
    </component>
    <component>
        <recommendedName>
            <fullName>Non-structural protein 8</fullName>
            <shortName>Nsp8</shortName>
        </recommendedName>
    </component>
    <component>
        <recommendedName>
            <fullName>RNA-directed RNA polymerase</fullName>
            <shortName>Pol</shortName>
            <shortName>RdRp</shortName>
            <ecNumber>2.7.7.48</ecNumber>
        </recommendedName>
        <alternativeName>
            <fullName>Nsp9</fullName>
        </alternativeName>
    </component>
    <component>
        <recommendedName>
            <fullName>Helicase</fullName>
            <shortName>Hel</shortName>
            <ecNumber>3.6.4.12</ecNumber>
            <ecNumber>3.6.4.13</ecNumber>
        </recommendedName>
        <alternativeName>
            <fullName>Nsp10</fullName>
        </alternativeName>
    </component>
    <component>
        <recommendedName>
            <fullName>Uridylate-specific endoribonuclease nsp11</fullName>
            <ecNumber>4.6.1.-</ecNumber>
        </recommendedName>
        <alternativeName>
            <fullName>Non-structural protein 11</fullName>
            <shortName>Nsp11</shortName>
        </alternativeName>
    </component>
    <component>
        <recommendedName>
            <fullName>Non-structural protein 12</fullName>
            <shortName>Nsp12</shortName>
        </recommendedName>
    </component>
</protein>
<dbReference type="EC" id="3.4.22.-"/>
<dbReference type="EC" id="3.4.21.-"/>
<dbReference type="EC" id="2.7.7.48"/>
<dbReference type="EC" id="3.6.4.12"/>
<dbReference type="EC" id="3.6.4.13"/>
<dbReference type="EC" id="4.6.1.-"/>
<dbReference type="EMBL" id="AF180391">
    <property type="protein sequence ID" value="AAA68933.3"/>
    <property type="molecule type" value="Genomic_RNA"/>
</dbReference>
<dbReference type="EMBL" id="AF180391">
    <property type="protein sequence ID" value="AAB63390.4"/>
    <property type="molecule type" value="Genomic_RNA"/>
</dbReference>
<dbReference type="EMBL" id="U28864">
    <property type="protein sequence ID" value="AAB40002.1"/>
    <property type="molecule type" value="mRNA"/>
</dbReference>
<dbReference type="RefSeq" id="YP_009109556.3">
    <molecule id="Q68772-1"/>
    <property type="nucleotide sequence ID" value="NC_003092.2"/>
</dbReference>
<dbReference type="SMR" id="Q68772"/>
<dbReference type="MEROPS" id="C32.002"/>
<dbReference type="KEGG" id="vg:22220025"/>
<dbReference type="Proteomes" id="UP000106311">
    <property type="component" value="Genome"/>
</dbReference>
<dbReference type="GO" id="GO:0033644">
    <property type="term" value="C:host cell membrane"/>
    <property type="evidence" value="ECO:0007669"/>
    <property type="project" value="UniProtKB-SubCell"/>
</dbReference>
<dbReference type="GO" id="GO:0044220">
    <property type="term" value="C:host cell perinuclear region of cytoplasm"/>
    <property type="evidence" value="ECO:0007669"/>
    <property type="project" value="UniProtKB-SubCell"/>
</dbReference>
<dbReference type="GO" id="GO:0016020">
    <property type="term" value="C:membrane"/>
    <property type="evidence" value="ECO:0007669"/>
    <property type="project" value="UniProtKB-KW"/>
</dbReference>
<dbReference type="GO" id="GO:0005524">
    <property type="term" value="F:ATP binding"/>
    <property type="evidence" value="ECO:0007669"/>
    <property type="project" value="UniProtKB-KW"/>
</dbReference>
<dbReference type="GO" id="GO:0016887">
    <property type="term" value="F:ATP hydrolysis activity"/>
    <property type="evidence" value="ECO:0007669"/>
    <property type="project" value="RHEA"/>
</dbReference>
<dbReference type="GO" id="GO:0004197">
    <property type="term" value="F:cysteine-type endopeptidase activity"/>
    <property type="evidence" value="ECO:0007669"/>
    <property type="project" value="InterPro"/>
</dbReference>
<dbReference type="GO" id="GO:0004519">
    <property type="term" value="F:endonuclease activity"/>
    <property type="evidence" value="ECO:0007669"/>
    <property type="project" value="UniProtKB-KW"/>
</dbReference>
<dbReference type="GO" id="GO:0016829">
    <property type="term" value="F:lyase activity"/>
    <property type="evidence" value="ECO:0007669"/>
    <property type="project" value="UniProtKB-KW"/>
</dbReference>
<dbReference type="GO" id="GO:0003723">
    <property type="term" value="F:RNA binding"/>
    <property type="evidence" value="ECO:0007669"/>
    <property type="project" value="InterPro"/>
</dbReference>
<dbReference type="GO" id="GO:0003724">
    <property type="term" value="F:RNA helicase activity"/>
    <property type="evidence" value="ECO:0007669"/>
    <property type="project" value="UniProtKB-EC"/>
</dbReference>
<dbReference type="GO" id="GO:0004540">
    <property type="term" value="F:RNA nuclease activity"/>
    <property type="evidence" value="ECO:0007669"/>
    <property type="project" value="UniProtKB-ARBA"/>
</dbReference>
<dbReference type="GO" id="GO:0003968">
    <property type="term" value="F:RNA-directed RNA polymerase activity"/>
    <property type="evidence" value="ECO:0007669"/>
    <property type="project" value="UniProtKB-KW"/>
</dbReference>
<dbReference type="GO" id="GO:0004252">
    <property type="term" value="F:serine-type endopeptidase activity"/>
    <property type="evidence" value="ECO:0007669"/>
    <property type="project" value="InterPro"/>
</dbReference>
<dbReference type="GO" id="GO:0008270">
    <property type="term" value="F:zinc ion binding"/>
    <property type="evidence" value="ECO:0007669"/>
    <property type="project" value="UniProtKB-KW"/>
</dbReference>
<dbReference type="GO" id="GO:0006351">
    <property type="term" value="P:DNA-templated transcription"/>
    <property type="evidence" value="ECO:0007669"/>
    <property type="project" value="InterPro"/>
</dbReference>
<dbReference type="GO" id="GO:0006508">
    <property type="term" value="P:proteolysis"/>
    <property type="evidence" value="ECO:0007669"/>
    <property type="project" value="UniProtKB-KW"/>
</dbReference>
<dbReference type="GO" id="GO:0019082">
    <property type="term" value="P:viral protein processing"/>
    <property type="evidence" value="ECO:0007669"/>
    <property type="project" value="InterPro"/>
</dbReference>
<dbReference type="GO" id="GO:0039694">
    <property type="term" value="P:viral RNA genome replication"/>
    <property type="evidence" value="ECO:0007669"/>
    <property type="project" value="InterPro"/>
</dbReference>
<dbReference type="GO" id="GO:0075523">
    <property type="term" value="P:viral translational frameshifting"/>
    <property type="evidence" value="ECO:0007669"/>
    <property type="project" value="UniProtKB-KW"/>
</dbReference>
<dbReference type="CDD" id="cd21410">
    <property type="entry name" value="1B_av_Nsp10-like"/>
    <property type="match status" value="1"/>
</dbReference>
<dbReference type="CDD" id="cd23189">
    <property type="entry name" value="Arteriviridae_RdRp"/>
    <property type="match status" value="1"/>
</dbReference>
<dbReference type="CDD" id="cd22528">
    <property type="entry name" value="av_Nsp3_ER-remodelling"/>
    <property type="match status" value="1"/>
</dbReference>
<dbReference type="CDD" id="cd21160">
    <property type="entry name" value="NendoU_av_Nsp11-like"/>
    <property type="match status" value="1"/>
</dbReference>
<dbReference type="CDD" id="cd21166">
    <property type="entry name" value="NTD_av_Nsp11-like"/>
    <property type="match status" value="1"/>
</dbReference>
<dbReference type="CDD" id="cd18786">
    <property type="entry name" value="SF1_C"/>
    <property type="match status" value="1"/>
</dbReference>
<dbReference type="CDD" id="cd21405">
    <property type="entry name" value="ZBD_av_Nsp10-like"/>
    <property type="match status" value="1"/>
</dbReference>
<dbReference type="Gene3D" id="3.90.70.160">
    <property type="match status" value="1"/>
</dbReference>
<dbReference type="Gene3D" id="3.30.1330.220">
    <property type="entry name" value="Arterivirus nonstructural protein 7 alpha"/>
    <property type="match status" value="1"/>
</dbReference>
<dbReference type="Gene3D" id="3.90.70.70">
    <property type="entry name" value="Arterivirus papain-like cysteine protease beta domain"/>
    <property type="match status" value="2"/>
</dbReference>
<dbReference type="Gene3D" id="3.40.50.300">
    <property type="entry name" value="P-loop containing nucleotide triphosphate hydrolases"/>
    <property type="match status" value="1"/>
</dbReference>
<dbReference type="Gene3D" id="2.40.10.10">
    <property type="entry name" value="Trypsin-like serine proteases"/>
    <property type="match status" value="2"/>
</dbReference>
<dbReference type="InterPro" id="IPR027351">
    <property type="entry name" value="(+)RNA_virus_helicase_core_dom"/>
</dbReference>
<dbReference type="InterPro" id="IPR031932">
    <property type="entry name" value="Arteri_nsp7a"/>
</dbReference>
<dbReference type="InterPro" id="IPR038451">
    <property type="entry name" value="Arteri_nsp7a_sf"/>
</dbReference>
<dbReference type="InterPro" id="IPR008743">
    <property type="entry name" value="Arterivirus_Nsp2_C33"/>
</dbReference>
<dbReference type="InterPro" id="IPR023338">
    <property type="entry name" value="Arterivirus_NSP4_peptidase"/>
</dbReference>
<dbReference type="InterPro" id="IPR046440">
    <property type="entry name" value="AV_NSP11N_COV_NSP15M"/>
</dbReference>
<dbReference type="InterPro" id="IPR008741">
    <property type="entry name" value="AV_PCPalpha"/>
</dbReference>
<dbReference type="InterPro" id="IPR025773">
    <property type="entry name" value="AV_PCPbeta"/>
</dbReference>
<dbReference type="InterPro" id="IPR038154">
    <property type="entry name" value="AV_PCPbeta_sf"/>
</dbReference>
<dbReference type="InterPro" id="IPR043502">
    <property type="entry name" value="DNA/RNA_pol_sf"/>
</dbReference>
<dbReference type="InterPro" id="IPR008760">
    <property type="entry name" value="EAV_peptidase_S32"/>
</dbReference>
<dbReference type="InterPro" id="IPR037227">
    <property type="entry name" value="EndoU-like"/>
</dbReference>
<dbReference type="InterPro" id="IPR043609">
    <property type="entry name" value="NendoU_nidovirus"/>
</dbReference>
<dbReference type="InterPro" id="IPR044863">
    <property type="entry name" value="NIRAN"/>
</dbReference>
<dbReference type="InterPro" id="IPR044348">
    <property type="entry name" value="NSP10_1B_Av"/>
</dbReference>
<dbReference type="InterPro" id="IPR027355">
    <property type="entry name" value="NSP10_Av_ZBD"/>
</dbReference>
<dbReference type="InterPro" id="IPR044320">
    <property type="entry name" value="NSP11_Av_N"/>
</dbReference>
<dbReference type="InterPro" id="IPR044314">
    <property type="entry name" value="NSP11_NendoU_Av"/>
</dbReference>
<dbReference type="InterPro" id="IPR027417">
    <property type="entry name" value="P-loop_NTPase"/>
</dbReference>
<dbReference type="InterPro" id="IPR009003">
    <property type="entry name" value="Peptidase_S1_PA"/>
</dbReference>
<dbReference type="InterPro" id="IPR043504">
    <property type="entry name" value="Peptidase_S1_PA_chymotrypsin"/>
</dbReference>
<dbReference type="InterPro" id="IPR001205">
    <property type="entry name" value="RNA-dir_pol_C"/>
</dbReference>
<dbReference type="InterPro" id="IPR007094">
    <property type="entry name" value="RNA-dir_pol_PSvirus"/>
</dbReference>
<dbReference type="Pfam" id="PF16749">
    <property type="entry name" value="Arteri_nsp7a"/>
    <property type="match status" value="1"/>
</dbReference>
<dbReference type="Pfam" id="PF19215">
    <property type="entry name" value="CoV_NSP15_C"/>
    <property type="match status" value="1"/>
</dbReference>
<dbReference type="Pfam" id="PF05411">
    <property type="entry name" value="Peptidase_C32"/>
    <property type="match status" value="2"/>
</dbReference>
<dbReference type="Pfam" id="PF05412">
    <property type="entry name" value="Peptidase_C33"/>
    <property type="match status" value="1"/>
</dbReference>
<dbReference type="Pfam" id="PF05579">
    <property type="entry name" value="Peptidase_S32"/>
    <property type="match status" value="1"/>
</dbReference>
<dbReference type="Pfam" id="PF22049">
    <property type="entry name" value="PRRSV-NSP11_N"/>
    <property type="match status" value="1"/>
</dbReference>
<dbReference type="Pfam" id="PF00680">
    <property type="entry name" value="RdRP_1"/>
    <property type="match status" value="1"/>
</dbReference>
<dbReference type="Pfam" id="PF01443">
    <property type="entry name" value="Viral_helicase1"/>
    <property type="match status" value="1"/>
</dbReference>
<dbReference type="SUPFAM" id="SSF56672">
    <property type="entry name" value="DNA/RNA polymerases"/>
    <property type="match status" value="1"/>
</dbReference>
<dbReference type="SUPFAM" id="SSF142877">
    <property type="entry name" value="EndoU-like"/>
    <property type="match status" value="1"/>
</dbReference>
<dbReference type="SUPFAM" id="SSF52540">
    <property type="entry name" value="P-loop containing nucleoside triphosphate hydrolases"/>
    <property type="match status" value="1"/>
</dbReference>
<dbReference type="SUPFAM" id="SSF50494">
    <property type="entry name" value="Trypsin-like serine proteases"/>
    <property type="match status" value="1"/>
</dbReference>
<dbReference type="PROSITE" id="PS51538">
    <property type="entry name" value="AV_CP"/>
    <property type="match status" value="1"/>
</dbReference>
<dbReference type="PROSITE" id="PS51961">
    <property type="entry name" value="AV_NSP11N_COV_NSP15M"/>
    <property type="match status" value="1"/>
</dbReference>
<dbReference type="PROSITE" id="PS51493">
    <property type="entry name" value="AV_NSP4_PRO"/>
    <property type="match status" value="1"/>
</dbReference>
<dbReference type="PROSITE" id="PS51539">
    <property type="entry name" value="AV_PCP_ALPHA"/>
    <property type="match status" value="1"/>
</dbReference>
<dbReference type="PROSITE" id="PS51540">
    <property type="entry name" value="AV_PCP_BETA"/>
    <property type="match status" value="1"/>
</dbReference>
<dbReference type="PROSITE" id="PS51652">
    <property type="entry name" value="AV_ZBD"/>
    <property type="match status" value="1"/>
</dbReference>
<dbReference type="PROSITE" id="PS51958">
    <property type="entry name" value="NENDOU"/>
    <property type="match status" value="1"/>
</dbReference>
<dbReference type="PROSITE" id="PS51947">
    <property type="entry name" value="NIRAN"/>
    <property type="match status" value="1"/>
</dbReference>
<dbReference type="PROSITE" id="PS51657">
    <property type="entry name" value="PSRV_HELICASE"/>
    <property type="match status" value="1"/>
</dbReference>
<dbReference type="PROSITE" id="PS50507">
    <property type="entry name" value="RDRP_SSRNA_POS"/>
    <property type="match status" value="1"/>
</dbReference>
<sequence length="3595" mass="391443">MFCECPRSNLVVMCSGAFCCVLCGHRRRPRPASESDRAKYGPIVQYVEARVAHVYSGLEGRYCALEMIPITYGNKFPYCKPLPVSFVIKTLAGVQGDLTRLEETPLPGGYGVIPCWGPHLAAVGYLSPAHVGRDWFEGATHAIVHIGSYGGHERPTTIPFNTTGGDVYQLGTCTIVETIDHVEWHAGVKPGTAICPLDRIDFAQKVITAFPEGFLANKAWLGDKRGTLKVEADPETAALSFEHGRCWLKLFPDPACELTTASTFGYQLNCGVQGKYIARRLQTNGLKLVQNQEGKFIAYTFHRGSWLGHIGHADESVPPDCQIIARFDVLPYNEWSPLPLLKLPGKTYFGGNASSVSWPEWKYDEQLLYADSLTAGFCWLQLFPPLSRKSEAQRAILAQQVNNYGVTGTYLEYRLRQYGIVLAECDYGEHYIYAAASDSSIRHISPVPIHDRHHVFVTRLTARFGAFDEGFDLGFGTRYGRRRGGGKKSGQSSGVRAPGRTTPDLAGDWGKAVDDQEKTASKVTTDKAMSTSEPAVVQVGCETKPVADAAAVPASVNSTGCALLPVQADPCCTAGVAAKESEPKAVAAPSIPITFGAPAGETLPVAASPLVVKKDKRCISVKLTAKKALPKETFIPPPDGGCGVHAFAAIQYHINTGHWPEQKPVVNWAYEAWTTNEDIGHMICSTETPAALEPCLHARYVVRLDSDHWVVDHYPNRPMCFVEACAHGWCSSLLSEPTGEEGEHLVDCSALYDCLGKFRNGTEFADTVLGLSKTAHCCNKRVPTPRKQAIMSLLNRPNCVPCIAPPSQVRTVDPSQPAAPLPPVPRPRKRKAAAQQVSKVPSEQDPSLAHDPPEKPDSVRPPKLGYLDRAWNNMLARTHKLHNLQQRVFGLYPQLLSMLLPSGARPSTPRLLGCYFSMAVAMFFLFLGSPLFILCAVLAGVIAPSARYPKILCCCLVVVYICTLFADAISSVCDNDDADCRAFLSDLGDRYSTNQPVYITPGPATFFLAVSRNFFVVSVALFPLHLLLLMVDVLLVIGVLCMDGYCFRCFSRCVRKAPEEVSLLTIPQSRVSRRFLLDICDFYSAPPVDIIRLATGLNGCFRGDYSPIGSSTSVITADKIDVKKVSCRTVCSFPSCPSEAVKVLHVLSVRGQMCAHNEQKVEKVDALPCKNPLFPYDLSSKKIVPVDSGTYEILSSIGCDMSHLVIGDGDFFKVMGVPRPSPFTVMRLRACRVVGGGRIFRTALAAAWVLFFVCAGYWVQMSTPCGIGTNDPFCKSSFGVPTYVNQGVCHGQYCASSKGVSRATSILTVRNPAVAPYIVLAACLVYLASVYVPGIIEVSLLVLNALLPAGPAISALRTLVMIIAAPHLSMKYIAFFCCTTAFVDFTSVVVVLTALLVGWILARYTGIGGFVTPYDIHDVVKSQRDGVAVANAPPNTYLGAVRRAALTGKPAFFVANNTGIVLEGLLREKTRASNSVSVYGVTCGSGGLFSDGNNTVCLTATHVCGNNKAVVDYQGTRYEAVFTTKGDYASAVVPIPGAFPPLKFAPQSYTGRAYWYANTGVETGFVGTTGCLVFSGPGDSGSPIITPDGLIVGVHTGSDSKGSGAYTTPNGLTVSGPLSLKEMGAHYEGPIVDVPTRLPRNVHNDTKSVPQPLARLLESSINLEGGLGTIQLIIVAVVLWKYAVDPLSIPFVVAFFLLNEILPKCLIRCFYNYSLFCLAAFSPLASRIFFIRLLTAALNRNPTALICHACFAGIAVLNDFIILGDIRLALRFTSFYVVGVNHDAIAIAVIGALVCVAACCLELFGLPQMASVIGCHGSFDPTFLSRYVHEGIRQGVSSGFGTESLSTALACALSEDELNFLAQAVDHKAIVSAIHVHKTLQDYILSKNAKILRASLASVHANHNASKALASLDKFLQGTSTQLKPGDPVILLGSTSAELVSVFSGDSEYIAEPIRSHPVAGTICTLCVVQAKCEGGLVTQVNGKFSPAKYLAVAGKVLADHPDYKLENDGRFPRTREDRVKDSVQVDTVDIGSHTFKKMWNKTTGDVWYDIIMPESAANPLAVHDLDSAVAAIGMSKEIPEKDMNRLRAIISKLQGLVSSEALNLLTAAGCTSADRSGLVITLDYAKIITHHARTRAFSSIDFKVVSPDEAMRTARLSPSPQPIIASFSDDKFLLLRRHPPSLLDVLTKGLDATCREPLHSPGDQGIDGYLWDFEAPHSKEAIWLSNQIISACAARRGDAPGCYPYKLHPVRGDPYRVGNVLKNTRFGDVTYTAVSDSDSPWLKVASINSGGCPVVTDRVLGSTIPVGSEIYLPTLPESVLDYLDSRPDCPTYYTQHGCEAAALQDLKKFNLSTQGFILPEVLNIVRNYLLGTIGYRPAIYKPSTVPSNDSHAGINGLSFSTKTLQALPDIDELCEKAIAEVWQTVTPVTLKKQFCSKAKTRTILGTNAMASLALRALLSGVTQGFQLAGKNSPICLGKSKFDPCTFEVKGRCLETDLASCDRSTPAIVRHFATKLLFEMACAERALPLYVVNCCHDLIVTQTSAATKRGGLSSGDPVTSIANTIYSLVLYVQHMVLTLLENGHPLSLKFLSGKLNFQDLYKLQAFIVYSDDLILLNESDDLPNFERWVPHLELALGFKVDPKKTVITSNPGFLGCEYRHGWLVPQKQRVLAALAYHVNAKDVHTYYINATAILNDASALSAFEPDWFDDLVIGLADCARKDGYSFPGPAAFREFFSRVSGYQFEGKEVQVCSICCSTARTTSLCGMALCDFCAHRHYHPGCHVLSSFCKHVIGSNTCKMCSIPILKDRTKFAELLASDQYRSVCTVEVTVVDGYTDAAPGRYSYQKKQYMLRKERRGCPLDLPDGKYSMKLLPNSCSGICVPKAQENATLSNFVVGPPGSGKTTFISNLLDDDAVVYCPTHVSLIAYSKSLPAARFSVPRGQDPAEYGTPALSGPTLQLLSAGYVPGAKHYLDEACYANPFDVFKLLSKTPITAIGDPAQLTPVGFDTPLYVFELMKKNALHAIYRFGQNICNAIQPCYSTKLVSQRQGDTEVIFQTKFAPRGKVLTPYHRDRVGAAVTIDSSQGSTYDVVTLYLPTKGSLTLARGLVGITRARERLYVYDPHHQLAKYFNLQPSSTTIRPHAVVIDGKARVMLSDKCYAAPEDFPGMLCTARPATAADRKILEETCLKLDFLESGSLSPLPRVCYNLGFYYSPDITKLLPIPSELAKHWPVATNRNNPEWPNRLVVSATRLSPLSHPAVCAGYYVGDSLFVGTPNVTSYWLTKFLDGRAVPMEDSVYSTGRFEMDIRDYLDSAERDFAAKHPHAFIGDTKGTTVGGCHHITSQYLPHVLPADSVVKVGVSKPGVAHKALCTVTDIYLPMLGSYTSPPTQSKVYKVNVDHKACKLMVWRDQTMYFQEGFDYHTLVDALRFVRLSSDGVYRVAPELTPMIGNRRLDLGAKPLRPVDLAITPWDDPKCEFLVTHASPFDMSDEFLLVNAFDFIKEDLLGKSVTPVYFYKRLSEPLHFDQNLPPHVGAILSKAPRFISLAKVFNFCFTPTACHCKVSVKTATGDHMCKCSLSSDEFLSRFNPTVGTP</sequence>
<accession>Q68772</accession>
<accession>P89132</accession>
<accession>Q87077</accession>